<keyword id="KW-0963">Cytoplasm</keyword>
<keyword id="KW-0285">Flavoprotein</keyword>
<keyword id="KW-0288">FMN</keyword>
<keyword id="KW-0520">NAD</keyword>
<keyword id="KW-0560">Oxidoreductase</keyword>
<keyword id="KW-0665">Pyrimidine biosynthesis</keyword>
<keyword id="KW-1185">Reference proteome</keyword>
<comment type="function">
    <text evidence="1">Catalyzes the conversion of dihydroorotate to orotate with NAD(+) as electron acceptor.</text>
</comment>
<comment type="catalytic activity">
    <reaction>
        <text>(S)-dihydroorotate + NAD(+) = orotate + NADH + H(+)</text>
        <dbReference type="Rhea" id="RHEA:13513"/>
        <dbReference type="ChEBI" id="CHEBI:15378"/>
        <dbReference type="ChEBI" id="CHEBI:30839"/>
        <dbReference type="ChEBI" id="CHEBI:30864"/>
        <dbReference type="ChEBI" id="CHEBI:57540"/>
        <dbReference type="ChEBI" id="CHEBI:57945"/>
        <dbReference type="EC" id="1.3.1.14"/>
    </reaction>
</comment>
<comment type="cofactor">
    <cofactor evidence="1">
        <name>FMN</name>
        <dbReference type="ChEBI" id="CHEBI:58210"/>
    </cofactor>
    <text evidence="1">Binds 1 FMN per subunit.</text>
</comment>
<comment type="pathway">
    <text>Pyrimidine metabolism; UMP biosynthesis via de novo pathway; orotate from (S)-dihydroorotate (NAD(+) route): step 1/1.</text>
</comment>
<comment type="subunit">
    <text evidence="1">Heterotetramer of 2 PyrK and 2 PyrD type B subunits.</text>
</comment>
<comment type="subcellular location">
    <subcellularLocation>
        <location evidence="1">Cytoplasm</location>
    </subcellularLocation>
</comment>
<comment type="similarity">
    <text evidence="2">Belongs to the dihydroorotate dehydrogenase family. Type 1 subfamily.</text>
</comment>
<sequence length="305" mass="31999">MQRPDMSVAVAGIKMRNPVMTASGTFGYGAEFADYLDLECIGAMISKGLSLKPKAGNPTPRIVETPGGMLNAIGLQNVGIDAFIEQKLPYLKNVNTPVIVNLYGNTLEEYGEVAARLDGLSGVAGIEVNISCPNVKQGGIVFGTDPGAAQEVVRLVKKNTTKPMIVKLSPNVTDVVLMAKACADAGADALSLINTLTGMAIDLERRRPVLANVTGGLSGPAIKPVALRMVWQVAKAVKLPLIGIGGIMNGRDALEFMLAGATAVQVGTASFLDPSAAQRIAREMEQYLVDHKIESVSSLIGALEL</sequence>
<feature type="chain" id="PRO_1000100222" description="Dihydroorotate dehydrogenase B (NAD(+)), catalytic subunit">
    <location>
        <begin position="1"/>
        <end position="305"/>
    </location>
</feature>
<feature type="active site" description="Nucleophile">
    <location>
        <position position="132"/>
    </location>
</feature>
<feature type="binding site" evidence="1">
    <location>
        <position position="23"/>
    </location>
    <ligand>
        <name>FMN</name>
        <dbReference type="ChEBI" id="CHEBI:58210"/>
    </ligand>
</feature>
<feature type="binding site" evidence="1">
    <location>
        <begin position="47"/>
        <end position="48"/>
    </location>
    <ligand>
        <name>FMN</name>
        <dbReference type="ChEBI" id="CHEBI:58210"/>
    </ligand>
</feature>
<feature type="binding site" evidence="1">
    <location>
        <position position="47"/>
    </location>
    <ligand>
        <name>substrate</name>
    </ligand>
</feature>
<feature type="binding site" evidence="1">
    <location>
        <begin position="71"/>
        <end position="75"/>
    </location>
    <ligand>
        <name>substrate</name>
    </ligand>
</feature>
<feature type="binding site" evidence="1">
    <location>
        <position position="101"/>
    </location>
    <ligand>
        <name>FMN</name>
        <dbReference type="ChEBI" id="CHEBI:58210"/>
    </ligand>
</feature>
<feature type="binding site" evidence="1">
    <location>
        <position position="129"/>
    </location>
    <ligand>
        <name>FMN</name>
        <dbReference type="ChEBI" id="CHEBI:58210"/>
    </ligand>
</feature>
<feature type="binding site" evidence="1">
    <location>
        <position position="129"/>
    </location>
    <ligand>
        <name>substrate</name>
    </ligand>
</feature>
<feature type="binding site" evidence="1">
    <location>
        <position position="167"/>
    </location>
    <ligand>
        <name>FMN</name>
        <dbReference type="ChEBI" id="CHEBI:58210"/>
    </ligand>
</feature>
<feature type="binding site" evidence="1">
    <location>
        <position position="193"/>
    </location>
    <ligand>
        <name>FMN</name>
        <dbReference type="ChEBI" id="CHEBI:58210"/>
    </ligand>
</feature>
<feature type="binding site" evidence="1">
    <location>
        <begin position="194"/>
        <end position="195"/>
    </location>
    <ligand>
        <name>substrate</name>
    </ligand>
</feature>
<feature type="binding site" evidence="1">
    <location>
        <position position="219"/>
    </location>
    <ligand>
        <name>FMN</name>
        <dbReference type="ChEBI" id="CHEBI:58210"/>
    </ligand>
</feature>
<feature type="binding site" evidence="1">
    <location>
        <begin position="245"/>
        <end position="246"/>
    </location>
    <ligand>
        <name>FMN</name>
        <dbReference type="ChEBI" id="CHEBI:58210"/>
    </ligand>
</feature>
<feature type="binding site" evidence="1">
    <location>
        <begin position="267"/>
        <end position="268"/>
    </location>
    <ligand>
        <name>FMN</name>
        <dbReference type="ChEBI" id="CHEBI:58210"/>
    </ligand>
</feature>
<reference key="1">
    <citation type="submission" date="2008-07" db="EMBL/GenBank/DDBJ databases">
        <title>Complete sequence of Geobacter bemidjiensis BEM.</title>
        <authorList>
            <consortium name="US DOE Joint Genome Institute"/>
            <person name="Lucas S."/>
            <person name="Copeland A."/>
            <person name="Lapidus A."/>
            <person name="Glavina del Rio T."/>
            <person name="Dalin E."/>
            <person name="Tice H."/>
            <person name="Bruce D."/>
            <person name="Goodwin L."/>
            <person name="Pitluck S."/>
            <person name="Kiss H."/>
            <person name="Brettin T."/>
            <person name="Detter J.C."/>
            <person name="Han C."/>
            <person name="Kuske C.R."/>
            <person name="Schmutz J."/>
            <person name="Larimer F."/>
            <person name="Land M."/>
            <person name="Hauser L."/>
            <person name="Kyrpides N."/>
            <person name="Lykidis A."/>
            <person name="Lovley D."/>
            <person name="Richardson P."/>
        </authorList>
    </citation>
    <scope>NUCLEOTIDE SEQUENCE [LARGE SCALE GENOMIC DNA]</scope>
    <source>
        <strain>ATCC BAA-1014 / DSM 16622 / JCM 12645 / Bem</strain>
    </source>
</reference>
<proteinExistence type="inferred from homology"/>
<organism>
    <name type="scientific">Citrifermentans bemidjiense (strain ATCC BAA-1014 / DSM 16622 / JCM 12645 / Bem)</name>
    <name type="common">Geobacter bemidjiensis</name>
    <dbReference type="NCBI Taxonomy" id="404380"/>
    <lineage>
        <taxon>Bacteria</taxon>
        <taxon>Pseudomonadati</taxon>
        <taxon>Thermodesulfobacteriota</taxon>
        <taxon>Desulfuromonadia</taxon>
        <taxon>Geobacterales</taxon>
        <taxon>Geobacteraceae</taxon>
        <taxon>Citrifermentans</taxon>
    </lineage>
</organism>
<dbReference type="EC" id="1.3.1.14"/>
<dbReference type="EMBL" id="CP001124">
    <property type="protein sequence ID" value="ACH39409.1"/>
    <property type="molecule type" value="Genomic_DNA"/>
</dbReference>
<dbReference type="RefSeq" id="WP_012530831.1">
    <property type="nucleotide sequence ID" value="NC_011146.1"/>
</dbReference>
<dbReference type="SMR" id="B5EFU4"/>
<dbReference type="STRING" id="404380.Gbem_2399"/>
<dbReference type="KEGG" id="gbm:Gbem_2399"/>
<dbReference type="eggNOG" id="COG0167">
    <property type="taxonomic scope" value="Bacteria"/>
</dbReference>
<dbReference type="HOGENOM" id="CLU_042042_0_0_7"/>
<dbReference type="OrthoDB" id="9802377at2"/>
<dbReference type="UniPathway" id="UPA00070">
    <property type="reaction ID" value="UER00945"/>
</dbReference>
<dbReference type="Proteomes" id="UP000008825">
    <property type="component" value="Chromosome"/>
</dbReference>
<dbReference type="GO" id="GO:0005737">
    <property type="term" value="C:cytoplasm"/>
    <property type="evidence" value="ECO:0007669"/>
    <property type="project" value="UniProtKB-SubCell"/>
</dbReference>
<dbReference type="GO" id="GO:0004589">
    <property type="term" value="F:dihydroorotate dehydrogenase (NAD+) activity"/>
    <property type="evidence" value="ECO:0007669"/>
    <property type="project" value="UniProtKB-EC"/>
</dbReference>
<dbReference type="GO" id="GO:0006207">
    <property type="term" value="P:'de novo' pyrimidine nucleobase biosynthetic process"/>
    <property type="evidence" value="ECO:0007669"/>
    <property type="project" value="InterPro"/>
</dbReference>
<dbReference type="GO" id="GO:0044205">
    <property type="term" value="P:'de novo' UMP biosynthetic process"/>
    <property type="evidence" value="ECO:0007669"/>
    <property type="project" value="UniProtKB-UniRule"/>
</dbReference>
<dbReference type="CDD" id="cd04740">
    <property type="entry name" value="DHOD_1B_like"/>
    <property type="match status" value="1"/>
</dbReference>
<dbReference type="FunFam" id="3.20.20.70:FF:000027">
    <property type="entry name" value="Dihydropyrimidine dehydrogenase [NADP(+)]"/>
    <property type="match status" value="1"/>
</dbReference>
<dbReference type="Gene3D" id="3.20.20.70">
    <property type="entry name" value="Aldolase class I"/>
    <property type="match status" value="1"/>
</dbReference>
<dbReference type="HAMAP" id="MF_00224">
    <property type="entry name" value="DHO_dh_type1"/>
    <property type="match status" value="1"/>
</dbReference>
<dbReference type="InterPro" id="IPR013785">
    <property type="entry name" value="Aldolase_TIM"/>
</dbReference>
<dbReference type="InterPro" id="IPR050074">
    <property type="entry name" value="DHO_dehydrogenase"/>
</dbReference>
<dbReference type="InterPro" id="IPR033888">
    <property type="entry name" value="DHOD_1B"/>
</dbReference>
<dbReference type="InterPro" id="IPR024920">
    <property type="entry name" value="Dihydroorotate_DH_1"/>
</dbReference>
<dbReference type="InterPro" id="IPR012135">
    <property type="entry name" value="Dihydroorotate_DH_1_2"/>
</dbReference>
<dbReference type="InterPro" id="IPR005720">
    <property type="entry name" value="Dihydroorotate_DH_cat"/>
</dbReference>
<dbReference type="InterPro" id="IPR001295">
    <property type="entry name" value="Dihydroorotate_DH_CS"/>
</dbReference>
<dbReference type="InterPro" id="IPR049622">
    <property type="entry name" value="Dihydroorotate_DH_I"/>
</dbReference>
<dbReference type="NCBIfam" id="NF005574">
    <property type="entry name" value="PRK07259.1"/>
    <property type="match status" value="1"/>
</dbReference>
<dbReference type="NCBIfam" id="TIGR01037">
    <property type="entry name" value="pyrD_sub1_fam"/>
    <property type="match status" value="1"/>
</dbReference>
<dbReference type="PANTHER" id="PTHR48109:SF1">
    <property type="entry name" value="DIHYDROOROTATE DEHYDROGENASE (FUMARATE)"/>
    <property type="match status" value="1"/>
</dbReference>
<dbReference type="PANTHER" id="PTHR48109">
    <property type="entry name" value="DIHYDROOROTATE DEHYDROGENASE (QUINONE), MITOCHONDRIAL-RELATED"/>
    <property type="match status" value="1"/>
</dbReference>
<dbReference type="Pfam" id="PF01180">
    <property type="entry name" value="DHO_dh"/>
    <property type="match status" value="1"/>
</dbReference>
<dbReference type="PIRSF" id="PIRSF000164">
    <property type="entry name" value="DHO_oxidase"/>
    <property type="match status" value="1"/>
</dbReference>
<dbReference type="SUPFAM" id="SSF51395">
    <property type="entry name" value="FMN-linked oxidoreductases"/>
    <property type="match status" value="1"/>
</dbReference>
<dbReference type="PROSITE" id="PS00911">
    <property type="entry name" value="DHODEHASE_1"/>
    <property type="match status" value="1"/>
</dbReference>
<dbReference type="PROSITE" id="PS00912">
    <property type="entry name" value="DHODEHASE_2"/>
    <property type="match status" value="1"/>
</dbReference>
<gene>
    <name type="primary">pyrD</name>
    <name type="ordered locus">Gbem_2399</name>
</gene>
<protein>
    <recommendedName>
        <fullName>Dihydroorotate dehydrogenase B (NAD(+)), catalytic subunit</fullName>
        <shortName>DHOD B</shortName>
        <shortName>DHODase B</shortName>
        <shortName>DHOdehase B</shortName>
        <ecNumber>1.3.1.14</ecNumber>
    </recommendedName>
    <alternativeName>
        <fullName>Dihydroorotate oxidase B</fullName>
    </alternativeName>
    <alternativeName>
        <fullName>Orotate reductase (NADH)</fullName>
    </alternativeName>
</protein>
<accession>B5EFU4</accession>
<name>PYRDB_CITBB</name>
<evidence type="ECO:0000250" key="1"/>
<evidence type="ECO:0000305" key="2"/>